<sequence length="284" mass="30270">MAQEKMELDLELPAGASPAEGGGPGGGGLRRSNSAPLIHGLSDSSPVFQAEAPSARRNSTTFPSRHGLLLPASPVRMHSSRLHQIKQEEGMDLINRETVHEREVQTAMQISHSWEESFSLSDNDVEKSASPKRIDFIPVSPAPSPTRGIGKQCFSPSLQSFVSSNGLPPSPIPSPTTRFTTRRSQSPINCIRPSVLGPLKRKCEMETDYQPKRFFQGITNMLSSDVAQLSDPGVCVSSDTLDGNSSSAGSSCNSPAKVSTTTDSPVSPAQAASPFIPVDELSSK</sequence>
<reference key="1">
    <citation type="journal article" date="2005" name="Science">
        <title>The transcriptional landscape of the mammalian genome.</title>
        <authorList>
            <person name="Carninci P."/>
            <person name="Kasukawa T."/>
            <person name="Katayama S."/>
            <person name="Gough J."/>
            <person name="Frith M.C."/>
            <person name="Maeda N."/>
            <person name="Oyama R."/>
            <person name="Ravasi T."/>
            <person name="Lenhard B."/>
            <person name="Wells C."/>
            <person name="Kodzius R."/>
            <person name="Shimokawa K."/>
            <person name="Bajic V.B."/>
            <person name="Brenner S.E."/>
            <person name="Batalov S."/>
            <person name="Forrest A.R."/>
            <person name="Zavolan M."/>
            <person name="Davis M.J."/>
            <person name="Wilming L.G."/>
            <person name="Aidinis V."/>
            <person name="Allen J.E."/>
            <person name="Ambesi-Impiombato A."/>
            <person name="Apweiler R."/>
            <person name="Aturaliya R.N."/>
            <person name="Bailey T.L."/>
            <person name="Bansal M."/>
            <person name="Baxter L."/>
            <person name="Beisel K.W."/>
            <person name="Bersano T."/>
            <person name="Bono H."/>
            <person name="Chalk A.M."/>
            <person name="Chiu K.P."/>
            <person name="Choudhary V."/>
            <person name="Christoffels A."/>
            <person name="Clutterbuck D.R."/>
            <person name="Crowe M.L."/>
            <person name="Dalla E."/>
            <person name="Dalrymple B.P."/>
            <person name="de Bono B."/>
            <person name="Della Gatta G."/>
            <person name="di Bernardo D."/>
            <person name="Down T."/>
            <person name="Engstrom P."/>
            <person name="Fagiolini M."/>
            <person name="Faulkner G."/>
            <person name="Fletcher C.F."/>
            <person name="Fukushima T."/>
            <person name="Furuno M."/>
            <person name="Futaki S."/>
            <person name="Gariboldi M."/>
            <person name="Georgii-Hemming P."/>
            <person name="Gingeras T.R."/>
            <person name="Gojobori T."/>
            <person name="Green R.E."/>
            <person name="Gustincich S."/>
            <person name="Harbers M."/>
            <person name="Hayashi Y."/>
            <person name="Hensch T.K."/>
            <person name="Hirokawa N."/>
            <person name="Hill D."/>
            <person name="Huminiecki L."/>
            <person name="Iacono M."/>
            <person name="Ikeo K."/>
            <person name="Iwama A."/>
            <person name="Ishikawa T."/>
            <person name="Jakt M."/>
            <person name="Kanapin A."/>
            <person name="Katoh M."/>
            <person name="Kawasawa Y."/>
            <person name="Kelso J."/>
            <person name="Kitamura H."/>
            <person name="Kitano H."/>
            <person name="Kollias G."/>
            <person name="Krishnan S.P."/>
            <person name="Kruger A."/>
            <person name="Kummerfeld S.K."/>
            <person name="Kurochkin I.V."/>
            <person name="Lareau L.F."/>
            <person name="Lazarevic D."/>
            <person name="Lipovich L."/>
            <person name="Liu J."/>
            <person name="Liuni S."/>
            <person name="McWilliam S."/>
            <person name="Madan Babu M."/>
            <person name="Madera M."/>
            <person name="Marchionni L."/>
            <person name="Matsuda H."/>
            <person name="Matsuzawa S."/>
            <person name="Miki H."/>
            <person name="Mignone F."/>
            <person name="Miyake S."/>
            <person name="Morris K."/>
            <person name="Mottagui-Tabar S."/>
            <person name="Mulder N."/>
            <person name="Nakano N."/>
            <person name="Nakauchi H."/>
            <person name="Ng P."/>
            <person name="Nilsson R."/>
            <person name="Nishiguchi S."/>
            <person name="Nishikawa S."/>
            <person name="Nori F."/>
            <person name="Ohara O."/>
            <person name="Okazaki Y."/>
            <person name="Orlando V."/>
            <person name="Pang K.C."/>
            <person name="Pavan W.J."/>
            <person name="Pavesi G."/>
            <person name="Pesole G."/>
            <person name="Petrovsky N."/>
            <person name="Piazza S."/>
            <person name="Reed J."/>
            <person name="Reid J.F."/>
            <person name="Ring B.Z."/>
            <person name="Ringwald M."/>
            <person name="Rost B."/>
            <person name="Ruan Y."/>
            <person name="Salzberg S.L."/>
            <person name="Sandelin A."/>
            <person name="Schneider C."/>
            <person name="Schoenbach C."/>
            <person name="Sekiguchi K."/>
            <person name="Semple C.A."/>
            <person name="Seno S."/>
            <person name="Sessa L."/>
            <person name="Sheng Y."/>
            <person name="Shibata Y."/>
            <person name="Shimada H."/>
            <person name="Shimada K."/>
            <person name="Silva D."/>
            <person name="Sinclair B."/>
            <person name="Sperling S."/>
            <person name="Stupka E."/>
            <person name="Sugiura K."/>
            <person name="Sultana R."/>
            <person name="Takenaka Y."/>
            <person name="Taki K."/>
            <person name="Tammoja K."/>
            <person name="Tan S.L."/>
            <person name="Tang S."/>
            <person name="Taylor M.S."/>
            <person name="Tegner J."/>
            <person name="Teichmann S.A."/>
            <person name="Ueda H.R."/>
            <person name="van Nimwegen E."/>
            <person name="Verardo R."/>
            <person name="Wei C.L."/>
            <person name="Yagi K."/>
            <person name="Yamanishi H."/>
            <person name="Zabarovsky E."/>
            <person name="Zhu S."/>
            <person name="Zimmer A."/>
            <person name="Hide W."/>
            <person name="Bult C."/>
            <person name="Grimmond S.M."/>
            <person name="Teasdale R.D."/>
            <person name="Liu E.T."/>
            <person name="Brusic V."/>
            <person name="Quackenbush J."/>
            <person name="Wahlestedt C."/>
            <person name="Mattick J.S."/>
            <person name="Hume D.A."/>
            <person name="Kai C."/>
            <person name="Sasaki D."/>
            <person name="Tomaru Y."/>
            <person name="Fukuda S."/>
            <person name="Kanamori-Katayama M."/>
            <person name="Suzuki M."/>
            <person name="Aoki J."/>
            <person name="Arakawa T."/>
            <person name="Iida J."/>
            <person name="Imamura K."/>
            <person name="Itoh M."/>
            <person name="Kato T."/>
            <person name="Kawaji H."/>
            <person name="Kawagashira N."/>
            <person name="Kawashima T."/>
            <person name="Kojima M."/>
            <person name="Kondo S."/>
            <person name="Konno H."/>
            <person name="Nakano K."/>
            <person name="Ninomiya N."/>
            <person name="Nishio T."/>
            <person name="Okada M."/>
            <person name="Plessy C."/>
            <person name="Shibata K."/>
            <person name="Shiraki T."/>
            <person name="Suzuki S."/>
            <person name="Tagami M."/>
            <person name="Waki K."/>
            <person name="Watahiki A."/>
            <person name="Okamura-Oho Y."/>
            <person name="Suzuki H."/>
            <person name="Kawai J."/>
            <person name="Hayashizaki Y."/>
        </authorList>
    </citation>
    <scope>NUCLEOTIDE SEQUENCE [LARGE SCALE MRNA]</scope>
    <source>
        <strain>C57BL/6J</strain>
        <strain>NOD</strain>
        <tissue>Cecum</tissue>
        <tissue>Cerebellum</tissue>
        <tissue>Embryo</tissue>
        <tissue>Spleen</tissue>
    </source>
</reference>
<reference key="2">
    <citation type="journal article" date="2004" name="Genome Res.">
        <title>The status, quality, and expansion of the NIH full-length cDNA project: the Mammalian Gene Collection (MGC).</title>
        <authorList>
            <consortium name="The MGC Project Team"/>
        </authorList>
    </citation>
    <scope>NUCLEOTIDE SEQUENCE [LARGE SCALE MRNA]</scope>
    <source>
        <tissue>Eye</tissue>
        <tissue>Mammary gland</tissue>
    </source>
</reference>
<reference key="3">
    <citation type="journal article" date="2004" name="Mol. Cell. Proteomics">
        <title>Phosphoproteomic analysis of the developing mouse brain.</title>
        <authorList>
            <person name="Ballif B.A."/>
            <person name="Villen J."/>
            <person name="Beausoleil S.A."/>
            <person name="Schwartz D."/>
            <person name="Gygi S.P."/>
        </authorList>
    </citation>
    <scope>PHOSPHORYLATION [LARGE SCALE ANALYSIS] AT SER-267</scope>
    <scope>IDENTIFICATION BY MASS SPECTROMETRY [LARGE SCALE ANALYSIS]</scope>
    <source>
        <tissue>Embryonic brain</tissue>
    </source>
</reference>
<reference key="4">
    <citation type="journal article" date="2007" name="Proc. Natl. Acad. Sci. U.S.A.">
        <title>Large-scale phosphorylation analysis of mouse liver.</title>
        <authorList>
            <person name="Villen J."/>
            <person name="Beausoleil S.A."/>
            <person name="Gerber S.A."/>
            <person name="Gygi S.P."/>
        </authorList>
    </citation>
    <scope>PHOSPHORYLATION [LARGE SCALE ANALYSIS] AT SER-140 AND SER-144</scope>
    <scope>IDENTIFICATION BY MASS SPECTROMETRY [LARGE SCALE ANALYSIS]</scope>
    <source>
        <tissue>Liver</tissue>
    </source>
</reference>
<reference key="5">
    <citation type="journal article" date="2008" name="J. Proteome Res.">
        <title>Specific phosphopeptide enrichment with immobilized titanium ion affinity chromatography adsorbent for phosphoproteome analysis.</title>
        <authorList>
            <person name="Zhou H."/>
            <person name="Ye M."/>
            <person name="Dong J."/>
            <person name="Han G."/>
            <person name="Jiang X."/>
            <person name="Wu R."/>
            <person name="Zou H."/>
        </authorList>
    </citation>
    <scope>IDENTIFICATION BY MASS SPECTROMETRY [LARGE SCALE ANALYSIS]</scope>
    <source>
        <tissue>Liver</tissue>
    </source>
</reference>
<reference key="6">
    <citation type="journal article" date="2009" name="Immunity">
        <title>The phagosomal proteome in interferon-gamma-activated macrophages.</title>
        <authorList>
            <person name="Trost M."/>
            <person name="English L."/>
            <person name="Lemieux S."/>
            <person name="Courcelles M."/>
            <person name="Desjardins M."/>
            <person name="Thibault P."/>
        </authorList>
    </citation>
    <scope>IDENTIFICATION BY MASS SPECTROMETRY [LARGE SCALE ANALYSIS]</scope>
</reference>
<reference key="7">
    <citation type="journal article" date="2009" name="Mol. Cell. Proteomics">
        <title>Large scale localization of protein phosphorylation by use of electron capture dissociation mass spectrometry.</title>
        <authorList>
            <person name="Sweet S.M."/>
            <person name="Bailey C.M."/>
            <person name="Cunningham D.L."/>
            <person name="Heath J.K."/>
            <person name="Cooper H.J."/>
        </authorList>
    </citation>
    <scope>PHOSPHORYLATION [LARGE SCALE ANALYSIS] AT SER-73</scope>
    <scope>IDENTIFICATION BY MASS SPECTROMETRY [LARGE SCALE ANALYSIS]</scope>
    <source>
        <tissue>Embryonic fibroblast</tissue>
    </source>
</reference>
<reference key="8">
    <citation type="journal article" date="2010" name="Cell">
        <title>A tissue-specific atlas of mouse protein phosphorylation and expression.</title>
        <authorList>
            <person name="Huttlin E.L."/>
            <person name="Jedrychowski M.P."/>
            <person name="Elias J.E."/>
            <person name="Goswami T."/>
            <person name="Rad R."/>
            <person name="Beausoleil S.A."/>
            <person name="Villen J."/>
            <person name="Haas W."/>
            <person name="Sowa M.E."/>
            <person name="Gygi S.P."/>
        </authorList>
    </citation>
    <scope>PHOSPHORYLATION [LARGE SCALE ANALYSIS] AT SER-45; SER-59; SER-73; SER-140; SER-144; SER-264; SER-267 AND SER-273</scope>
    <scope>IDENTIFICATION BY MASS SPECTROMETRY [LARGE SCALE ANALYSIS]</scope>
    <source>
        <tissue>Brain</tissue>
        <tissue>Brown adipose tissue</tissue>
        <tissue>Heart</tissue>
        <tissue>Kidney</tissue>
        <tissue>Liver</tissue>
        <tissue>Lung</tissue>
        <tissue>Pancreas</tissue>
        <tissue>Spleen</tissue>
        <tissue>Testis</tissue>
    </source>
</reference>
<name>PBIR1_MOUSE</name>
<accession>Q9DB52</accession>
<accession>Q3TA50</accession>
<accession>Q9D078</accession>
<evidence type="ECO:0000250" key="1">
    <source>
        <dbReference type="UniProtKB" id="Q96E09"/>
    </source>
</evidence>
<evidence type="ECO:0000256" key="2">
    <source>
        <dbReference type="SAM" id="MobiDB-lite"/>
    </source>
</evidence>
<evidence type="ECO:0000305" key="3"/>
<evidence type="ECO:0000312" key="4">
    <source>
        <dbReference type="MGI" id="MGI:1915284"/>
    </source>
</evidence>
<evidence type="ECO:0007744" key="5">
    <source>
    </source>
</evidence>
<evidence type="ECO:0007744" key="6">
    <source>
    </source>
</evidence>
<evidence type="ECO:0007744" key="7">
    <source>
    </source>
</evidence>
<evidence type="ECO:0007744" key="8">
    <source>
    </source>
</evidence>
<protein>
    <recommendedName>
        <fullName evidence="1">P2R1A-PPP2R2A-interacting phosphatase regulator 1</fullName>
    </recommendedName>
    <alternativeName>
        <fullName evidence="1">PABIR family member 1</fullName>
    </alternativeName>
</protein>
<comment type="function">
    <text evidence="1">Acts as an inhibitor of serine/threonine-protein phosphatase 2A (PP2A) activity (By similarity). Inhibits PP2A activity by blocking the substrate binding site on PPP2R2A and the active site of PPP2CA (By similarity). Potentiates ubiquitin-mediated proteasomal degradation of serine/threonine-protein phosphatase 2A catalytic subunit alpha (PPP2CA) (By similarity). Inhibits PP2A-mediated dephosphorylation of WEE1, promoting ubiquitin-mediated proteolysis of WEE1, thereby releasing G2/M checkpoint (By similarity).</text>
</comment>
<comment type="subunit">
    <text evidence="1">Interacts with PPP2CA and PPP2R1A (By similarity). Interacts (via its N-terminus) with PPP2R2A; the interaction is direct and this interaction inhibits PP2A activity (By similarity). The CHEK1-mediated Ser-34 phosphorylated form interacts with 14-3-3 proteins (By similarity).</text>
</comment>
<comment type="subcellular location">
    <subcellularLocation>
        <location evidence="1">Nucleus</location>
    </subcellularLocation>
    <subcellularLocation>
        <location evidence="1">Cytoplasm</location>
    </subcellularLocation>
    <text evidence="1">The CHEK1-mediated Ser-34 phosphorylated form is sequestered by 14-3-3 proteins in the cytoplasm and fails to translocate to the nucleus, where it otherwise inhibits serine/threonine-protein phosphatase 2A.</text>
</comment>
<comment type="PTM">
    <text evidence="1">CHEK1-mediated phosphorylation at Ser-34 negatively regulates its ability to inhibit serine/threonine-protein phosphatase 2A (PP2A) activity. Phosphorylation leads to its release from the PP2A complex and its sequestration by 14-3-3 proteins in the cytoplasm resulting in its inability to translocate to the nucleus, where it otherwise inhibits PP2A.</text>
</comment>
<comment type="similarity">
    <text evidence="3">Belongs to the FAM122 family.</text>
</comment>
<organism>
    <name type="scientific">Mus musculus</name>
    <name type="common">Mouse</name>
    <dbReference type="NCBI Taxonomy" id="10090"/>
    <lineage>
        <taxon>Eukaryota</taxon>
        <taxon>Metazoa</taxon>
        <taxon>Chordata</taxon>
        <taxon>Craniata</taxon>
        <taxon>Vertebrata</taxon>
        <taxon>Euteleostomi</taxon>
        <taxon>Mammalia</taxon>
        <taxon>Eutheria</taxon>
        <taxon>Euarchontoglires</taxon>
        <taxon>Glires</taxon>
        <taxon>Rodentia</taxon>
        <taxon>Myomorpha</taxon>
        <taxon>Muroidea</taxon>
        <taxon>Muridae</taxon>
        <taxon>Murinae</taxon>
        <taxon>Mus</taxon>
        <taxon>Mus</taxon>
    </lineage>
</organism>
<proteinExistence type="evidence at protein level"/>
<feature type="chain" id="PRO_0000089690" description="P2R1A-PPP2R2A-interacting phosphatase regulator 1">
    <location>
        <begin position="1"/>
        <end position="284"/>
    </location>
</feature>
<feature type="region of interest" description="Disordered" evidence="2">
    <location>
        <begin position="1"/>
        <end position="65"/>
    </location>
</feature>
<feature type="region of interest" description="Disordered" evidence="2">
    <location>
        <begin position="164"/>
        <end position="185"/>
    </location>
</feature>
<feature type="region of interest" description="Disordered" evidence="2">
    <location>
        <begin position="233"/>
        <end position="284"/>
    </location>
</feature>
<feature type="compositionally biased region" description="Gly residues" evidence="2">
    <location>
        <begin position="20"/>
        <end position="29"/>
    </location>
</feature>
<feature type="compositionally biased region" description="Low complexity" evidence="2">
    <location>
        <begin position="175"/>
        <end position="185"/>
    </location>
</feature>
<feature type="compositionally biased region" description="Low complexity" evidence="2">
    <location>
        <begin position="243"/>
        <end position="254"/>
    </location>
</feature>
<feature type="compositionally biased region" description="Polar residues" evidence="2">
    <location>
        <begin position="256"/>
        <end position="267"/>
    </location>
</feature>
<feature type="modified residue" description="Phosphoserine" evidence="1">
    <location>
        <position position="32"/>
    </location>
</feature>
<feature type="modified residue" description="Phosphoserine; by CHEK1" evidence="1">
    <location>
        <position position="34"/>
    </location>
</feature>
<feature type="modified residue" description="Phosphoserine" evidence="1">
    <location>
        <position position="42"/>
    </location>
</feature>
<feature type="modified residue" description="Phosphoserine" evidence="8">
    <location>
        <position position="45"/>
    </location>
</feature>
<feature type="modified residue" description="Phosphoserine" evidence="8">
    <location>
        <position position="59"/>
    </location>
</feature>
<feature type="modified residue" description="Phosphoserine" evidence="7 8">
    <location>
        <position position="73"/>
    </location>
</feature>
<feature type="modified residue" description="Phosphoserine" evidence="6 8">
    <location>
        <position position="140"/>
    </location>
</feature>
<feature type="modified residue" description="Phosphoserine" evidence="6 8">
    <location>
        <position position="144"/>
    </location>
</feature>
<feature type="modified residue" description="Phosphothreonine" evidence="1">
    <location>
        <position position="146"/>
    </location>
</feature>
<feature type="modified residue" description="Phosphoserine" evidence="1">
    <location>
        <position position="184"/>
    </location>
</feature>
<feature type="modified residue" description="Phosphoserine" evidence="1">
    <location>
        <position position="186"/>
    </location>
</feature>
<feature type="modified residue" description="Phosphoserine" evidence="8">
    <location>
        <position position="264"/>
    </location>
</feature>
<feature type="modified residue" description="Phosphoserine" evidence="5 8">
    <location>
        <position position="267"/>
    </location>
</feature>
<feature type="modified residue" description="Phosphoserine" evidence="8">
    <location>
        <position position="273"/>
    </location>
</feature>
<feature type="cross-link" description="Glycyl lysine isopeptide (Lys-Gly) (interchain with G-Cter in SUMO1)" evidence="1">
    <location>
        <position position="86"/>
    </location>
</feature>
<feature type="sequence conflict" description="In Ref. 1; BAB27811." evidence="3" ref="1">
    <original>PAE</original>
    <variation>RRR</variation>
    <location>
        <begin position="18"/>
        <end position="20"/>
    </location>
</feature>
<feature type="sequence conflict" description="In Ref. 1; BAB27811." evidence="3" ref="1">
    <original>L</original>
    <variation>P</variation>
    <location>
        <position position="37"/>
    </location>
</feature>
<keyword id="KW-0963">Cytoplasm</keyword>
<keyword id="KW-1017">Isopeptide bond</keyword>
<keyword id="KW-0539">Nucleus</keyword>
<keyword id="KW-0597">Phosphoprotein</keyword>
<keyword id="KW-0650">Protein phosphatase inhibitor</keyword>
<keyword id="KW-1185">Reference proteome</keyword>
<keyword id="KW-0832">Ubl conjugation</keyword>
<dbReference type="EMBL" id="AK005219">
    <property type="protein sequence ID" value="BAB23889.1"/>
    <property type="molecule type" value="mRNA"/>
</dbReference>
<dbReference type="EMBL" id="AK011741">
    <property type="protein sequence ID" value="BAB27811.1"/>
    <property type="molecule type" value="mRNA"/>
</dbReference>
<dbReference type="EMBL" id="AK033646">
    <property type="protein sequence ID" value="BAC28405.1"/>
    <property type="molecule type" value="mRNA"/>
</dbReference>
<dbReference type="EMBL" id="AK077654">
    <property type="protein sequence ID" value="BAC36930.1"/>
    <property type="molecule type" value="mRNA"/>
</dbReference>
<dbReference type="EMBL" id="AK172089">
    <property type="protein sequence ID" value="BAE42820.1"/>
    <property type="molecule type" value="mRNA"/>
</dbReference>
<dbReference type="EMBL" id="BC028637">
    <property type="protein sequence ID" value="AAH28637.1"/>
    <property type="molecule type" value="mRNA"/>
</dbReference>
<dbReference type="EMBL" id="BC083062">
    <property type="protein sequence ID" value="AAH83062.1"/>
    <property type="molecule type" value="mRNA"/>
</dbReference>
<dbReference type="CCDS" id="CCDS29712.1"/>
<dbReference type="RefSeq" id="NP_080796.1">
    <property type="nucleotide sequence ID" value="NM_026520.4"/>
</dbReference>
<dbReference type="SMR" id="Q9DB52"/>
<dbReference type="FunCoup" id="Q9DB52">
    <property type="interactions" value="4215"/>
</dbReference>
<dbReference type="STRING" id="10090.ENSMUSP00000097152"/>
<dbReference type="GlyGen" id="Q9DB52">
    <property type="glycosylation" value="2 sites, 1 N-linked glycan (1 site)"/>
</dbReference>
<dbReference type="iPTMnet" id="Q9DB52"/>
<dbReference type="PhosphoSitePlus" id="Q9DB52"/>
<dbReference type="jPOST" id="Q9DB52"/>
<dbReference type="PaxDb" id="10090-ENSMUSP00000097152"/>
<dbReference type="PeptideAtlas" id="Q9DB52"/>
<dbReference type="ProteomicsDB" id="271511"/>
<dbReference type="Pumba" id="Q9DB52"/>
<dbReference type="Antibodypedia" id="26789">
    <property type="antibodies" value="50 antibodies from 13 providers"/>
</dbReference>
<dbReference type="Ensembl" id="ENSMUST00000099556.2">
    <property type="protein sequence ID" value="ENSMUSP00000097152.2"/>
    <property type="gene ID" value="ENSMUSG00000074922.2"/>
</dbReference>
<dbReference type="GeneID" id="68034"/>
<dbReference type="KEGG" id="mmu:68034"/>
<dbReference type="UCSC" id="uc008haq.1">
    <property type="organism name" value="mouse"/>
</dbReference>
<dbReference type="AGR" id="MGI:1915284"/>
<dbReference type="CTD" id="116224"/>
<dbReference type="MGI" id="MGI:1915284">
    <property type="gene designation" value="Pabir1"/>
</dbReference>
<dbReference type="VEuPathDB" id="HostDB:ENSMUSG00000074922"/>
<dbReference type="eggNOG" id="ENOG502QTCH">
    <property type="taxonomic scope" value="Eukaryota"/>
</dbReference>
<dbReference type="GeneTree" id="ENSGT00390000015476"/>
<dbReference type="HOGENOM" id="CLU_083344_0_0_1"/>
<dbReference type="InParanoid" id="Q9DB52"/>
<dbReference type="OMA" id="ISHHTDS"/>
<dbReference type="OrthoDB" id="10036177at2759"/>
<dbReference type="PhylomeDB" id="Q9DB52"/>
<dbReference type="TreeFam" id="TF330808"/>
<dbReference type="BioGRID-ORCS" id="68034">
    <property type="hits" value="12 hits in 80 CRISPR screens"/>
</dbReference>
<dbReference type="PRO" id="PR:Q9DB52"/>
<dbReference type="Proteomes" id="UP000000589">
    <property type="component" value="Chromosome 19"/>
</dbReference>
<dbReference type="RNAct" id="Q9DB52">
    <property type="molecule type" value="protein"/>
</dbReference>
<dbReference type="Bgee" id="ENSMUSG00000074922">
    <property type="expression patterns" value="Expressed in pigmented layer of retina and 255 other cell types or tissues"/>
</dbReference>
<dbReference type="GO" id="GO:0005737">
    <property type="term" value="C:cytoplasm"/>
    <property type="evidence" value="ECO:0000250"/>
    <property type="project" value="UniProtKB"/>
</dbReference>
<dbReference type="GO" id="GO:0016604">
    <property type="term" value="C:nuclear body"/>
    <property type="evidence" value="ECO:0007669"/>
    <property type="project" value="Ensembl"/>
</dbReference>
<dbReference type="GO" id="GO:0005634">
    <property type="term" value="C:nucleus"/>
    <property type="evidence" value="ECO:0000250"/>
    <property type="project" value="UniProtKB"/>
</dbReference>
<dbReference type="GO" id="GO:0051721">
    <property type="term" value="F:protein phosphatase 2A binding"/>
    <property type="evidence" value="ECO:0007669"/>
    <property type="project" value="Ensembl"/>
</dbReference>
<dbReference type="GO" id="GO:0004865">
    <property type="term" value="F:protein serine/threonine phosphatase inhibitor activity"/>
    <property type="evidence" value="ECO:0000250"/>
    <property type="project" value="UniProtKB"/>
</dbReference>
<dbReference type="GO" id="GO:0044818">
    <property type="term" value="P:mitotic G2/M transition checkpoint"/>
    <property type="evidence" value="ECO:0000250"/>
    <property type="project" value="UniProtKB"/>
</dbReference>
<dbReference type="GO" id="GO:0030307">
    <property type="term" value="P:positive regulation of cell growth"/>
    <property type="evidence" value="ECO:0000250"/>
    <property type="project" value="UniProtKB"/>
</dbReference>
<dbReference type="GO" id="GO:0032436">
    <property type="term" value="P:positive regulation of proteasomal ubiquitin-dependent protein catabolic process"/>
    <property type="evidence" value="ECO:0000250"/>
    <property type="project" value="UniProtKB"/>
</dbReference>
<dbReference type="InterPro" id="IPR026716">
    <property type="entry name" value="PBIR1/2/3"/>
</dbReference>
<dbReference type="PANTHER" id="PTHR22227">
    <property type="entry name" value="FAMILY WITH SEQUENCE SIMILARITY 122B ISOFORM X1"/>
    <property type="match status" value="1"/>
</dbReference>
<dbReference type="PANTHER" id="PTHR22227:SF14">
    <property type="entry name" value="PPP2R1A-PPP2R2A-INTERACTING PHOSPHATASE REGULATOR 1"/>
    <property type="match status" value="1"/>
</dbReference>
<gene>
    <name evidence="1" type="primary">Pabir1</name>
    <name evidence="4" type="synonym">Fam122a</name>
</gene>